<comment type="function">
    <text evidence="1">Sulfur carrier protein involved in sulfur trafficking in the cell. Part of a sulfur-relay system required for 2-thiolation during synthesis of 2-thiouridine of the modified wobble base 5-methylaminomethyl-2-thiouridine (mnm(5)s(2)U) in tRNA. Interacts with IscS and stimulates its cysteine desulfurase activity. Accepts an activated sulfur from IscS, which is then transferred to TusD, and thus determines the direction of sulfur flow from IscS to 2-thiouridine formation. Also appears to be involved in sulfur transfer for the biosynthesis of molybdopterin.</text>
</comment>
<comment type="pathway">
    <text evidence="1">tRNA modification.</text>
</comment>
<comment type="subunit">
    <text evidence="1">Interacts with IscS.</text>
</comment>
<comment type="subcellular location">
    <subcellularLocation>
        <location evidence="1">Cytoplasm</location>
    </subcellularLocation>
</comment>
<comment type="similarity">
    <text evidence="1">Belongs to the sulfur carrier protein TusA family.</text>
</comment>
<reference key="1">
    <citation type="journal article" date="2003" name="Nat. Biotechnol.">
        <title>The genome sequence of the entomopathogenic bacterium Photorhabdus luminescens.</title>
        <authorList>
            <person name="Duchaud E."/>
            <person name="Rusniok C."/>
            <person name="Frangeul L."/>
            <person name="Buchrieser C."/>
            <person name="Givaudan A."/>
            <person name="Taourit S."/>
            <person name="Bocs S."/>
            <person name="Boursaux-Eude C."/>
            <person name="Chandler M."/>
            <person name="Charles J.-F."/>
            <person name="Dassa E."/>
            <person name="Derose R."/>
            <person name="Derzelle S."/>
            <person name="Freyssinet G."/>
            <person name="Gaudriault S."/>
            <person name="Medigue C."/>
            <person name="Lanois A."/>
            <person name="Powell K."/>
            <person name="Siguier P."/>
            <person name="Vincent R."/>
            <person name="Wingate V."/>
            <person name="Zouine M."/>
            <person name="Glaser P."/>
            <person name="Boemare N."/>
            <person name="Danchin A."/>
            <person name="Kunst F."/>
        </authorList>
    </citation>
    <scope>NUCLEOTIDE SEQUENCE [LARGE SCALE GENOMIC DNA]</scope>
    <source>
        <strain>DSM 15139 / CIP 105565 / TT01</strain>
    </source>
</reference>
<gene>
    <name evidence="1" type="primary">tusA</name>
    <name type="ordered locus">plu4109</name>
</gene>
<organism>
    <name type="scientific">Photorhabdus laumondii subsp. laumondii (strain DSM 15139 / CIP 105565 / TT01)</name>
    <name type="common">Photorhabdus luminescens subsp. laumondii</name>
    <dbReference type="NCBI Taxonomy" id="243265"/>
    <lineage>
        <taxon>Bacteria</taxon>
        <taxon>Pseudomonadati</taxon>
        <taxon>Pseudomonadota</taxon>
        <taxon>Gammaproteobacteria</taxon>
        <taxon>Enterobacterales</taxon>
        <taxon>Morganellaceae</taxon>
        <taxon>Photorhabdus</taxon>
    </lineage>
</organism>
<proteinExistence type="inferred from homology"/>
<name>TUSA_PHOLL</name>
<protein>
    <recommendedName>
        <fullName evidence="1">Sulfur carrier protein TusA</fullName>
    </recommendedName>
    <alternativeName>
        <fullName evidence="1">Sulfur mediator TusA</fullName>
    </alternativeName>
    <alternativeName>
        <fullName evidence="1">Sulfur transfer protein TusA</fullName>
    </alternativeName>
    <alternativeName>
        <fullName evidence="1">tRNA 2-thiouridine synthesizing protein A</fullName>
    </alternativeName>
</protein>
<keyword id="KW-0963">Cytoplasm</keyword>
<keyword id="KW-1185">Reference proteome</keyword>
<keyword id="KW-0819">tRNA processing</keyword>
<accession>Q7MZZ5</accession>
<feature type="chain" id="PRO_0000159043" description="Sulfur carrier protein TusA">
    <location>
        <begin position="1"/>
        <end position="84"/>
    </location>
</feature>
<feature type="active site" description="Cysteine persulfide intermediate" evidence="1">
    <location>
        <position position="19"/>
    </location>
</feature>
<sequence>MPDVFTHPDKTLDTQGLRCPEPVMMVRKTVRHMEAGQMLLILADDPATTRDIPSFCRFMEHQLVAQETEQMPYRYLVRKKESQL</sequence>
<evidence type="ECO:0000255" key="1">
    <source>
        <dbReference type="HAMAP-Rule" id="MF_00413"/>
    </source>
</evidence>
<dbReference type="EMBL" id="BX571872">
    <property type="protein sequence ID" value="CAE16481.1"/>
    <property type="molecule type" value="Genomic_DNA"/>
</dbReference>
<dbReference type="RefSeq" id="WP_011148230.1">
    <property type="nucleotide sequence ID" value="NC_005126.1"/>
</dbReference>
<dbReference type="SMR" id="Q7MZZ5"/>
<dbReference type="STRING" id="243265.plu4109"/>
<dbReference type="GeneID" id="88808255"/>
<dbReference type="KEGG" id="plu:plu4109"/>
<dbReference type="eggNOG" id="COG0425">
    <property type="taxonomic scope" value="Bacteria"/>
</dbReference>
<dbReference type="HOGENOM" id="CLU_165255_5_0_6"/>
<dbReference type="OrthoDB" id="9797352at2"/>
<dbReference type="Proteomes" id="UP000002514">
    <property type="component" value="Chromosome"/>
</dbReference>
<dbReference type="GO" id="GO:0005737">
    <property type="term" value="C:cytoplasm"/>
    <property type="evidence" value="ECO:0007669"/>
    <property type="project" value="UniProtKB-SubCell"/>
</dbReference>
<dbReference type="GO" id="GO:0097163">
    <property type="term" value="F:sulfur carrier activity"/>
    <property type="evidence" value="ECO:0007669"/>
    <property type="project" value="UniProtKB-UniRule"/>
</dbReference>
<dbReference type="GO" id="GO:0002143">
    <property type="term" value="P:tRNA wobble position uridine thiolation"/>
    <property type="evidence" value="ECO:0007669"/>
    <property type="project" value="InterPro"/>
</dbReference>
<dbReference type="CDD" id="cd03423">
    <property type="entry name" value="SirA"/>
    <property type="match status" value="1"/>
</dbReference>
<dbReference type="Gene3D" id="3.30.110.40">
    <property type="entry name" value="TusA-like domain"/>
    <property type="match status" value="1"/>
</dbReference>
<dbReference type="HAMAP" id="MF_00413">
    <property type="entry name" value="Thiourid_synth_A"/>
    <property type="match status" value="1"/>
</dbReference>
<dbReference type="InterPro" id="IPR022931">
    <property type="entry name" value="Sulphur_carrier_TusA"/>
</dbReference>
<dbReference type="InterPro" id="IPR001455">
    <property type="entry name" value="TusA-like"/>
</dbReference>
<dbReference type="InterPro" id="IPR036868">
    <property type="entry name" value="TusA-like_sf"/>
</dbReference>
<dbReference type="NCBIfam" id="NF001423">
    <property type="entry name" value="PRK00299.1"/>
    <property type="match status" value="1"/>
</dbReference>
<dbReference type="PANTHER" id="PTHR33279:SF2">
    <property type="entry name" value="SULFUR CARRIER PROTEIN TUSA"/>
    <property type="match status" value="1"/>
</dbReference>
<dbReference type="PANTHER" id="PTHR33279">
    <property type="entry name" value="SULFUR CARRIER PROTEIN YEDF-RELATED"/>
    <property type="match status" value="1"/>
</dbReference>
<dbReference type="Pfam" id="PF01206">
    <property type="entry name" value="TusA"/>
    <property type="match status" value="1"/>
</dbReference>
<dbReference type="SUPFAM" id="SSF64307">
    <property type="entry name" value="SirA-like"/>
    <property type="match status" value="1"/>
</dbReference>
<dbReference type="PROSITE" id="PS01148">
    <property type="entry name" value="UPF0033"/>
    <property type="match status" value="1"/>
</dbReference>